<accession>A8MG73</accession>
<keyword id="KW-0030">Aminoacyl-tRNA synthetase</keyword>
<keyword id="KW-0067">ATP-binding</keyword>
<keyword id="KW-0963">Cytoplasm</keyword>
<keyword id="KW-0436">Ligase</keyword>
<keyword id="KW-0547">Nucleotide-binding</keyword>
<keyword id="KW-0648">Protein biosynthesis</keyword>
<keyword id="KW-1185">Reference proteome</keyword>
<feature type="chain" id="PRO_1000125526" description="Glycine--tRNA ligase">
    <location>
        <begin position="1"/>
        <end position="462"/>
    </location>
</feature>
<feature type="binding site" evidence="1">
    <location>
        <position position="100"/>
    </location>
    <ligand>
        <name>substrate</name>
    </ligand>
</feature>
<feature type="binding site" evidence="1">
    <location>
        <position position="174"/>
    </location>
    <ligand>
        <name>substrate</name>
    </ligand>
</feature>
<feature type="binding site" evidence="1">
    <location>
        <begin position="206"/>
        <end position="208"/>
    </location>
    <ligand>
        <name>ATP</name>
        <dbReference type="ChEBI" id="CHEBI:30616"/>
    </ligand>
</feature>
<feature type="binding site" evidence="1">
    <location>
        <begin position="216"/>
        <end position="221"/>
    </location>
    <ligand>
        <name>ATP</name>
        <dbReference type="ChEBI" id="CHEBI:30616"/>
    </ligand>
</feature>
<feature type="binding site" evidence="1">
    <location>
        <begin position="221"/>
        <end position="225"/>
    </location>
    <ligand>
        <name>substrate</name>
    </ligand>
</feature>
<feature type="binding site" evidence="1">
    <location>
        <begin position="290"/>
        <end position="291"/>
    </location>
    <ligand>
        <name>ATP</name>
        <dbReference type="ChEBI" id="CHEBI:30616"/>
    </ligand>
</feature>
<feature type="binding site" evidence="1">
    <location>
        <begin position="330"/>
        <end position="334"/>
    </location>
    <ligand>
        <name>substrate</name>
    </ligand>
</feature>
<feature type="binding site" evidence="1">
    <location>
        <begin position="334"/>
        <end position="337"/>
    </location>
    <ligand>
        <name>ATP</name>
        <dbReference type="ChEBI" id="CHEBI:30616"/>
    </ligand>
</feature>
<comment type="function">
    <text evidence="1">Catalyzes the attachment of glycine to tRNA(Gly).</text>
</comment>
<comment type="catalytic activity">
    <reaction evidence="1">
        <text>tRNA(Gly) + glycine + ATP = glycyl-tRNA(Gly) + AMP + diphosphate</text>
        <dbReference type="Rhea" id="RHEA:16013"/>
        <dbReference type="Rhea" id="RHEA-COMP:9664"/>
        <dbReference type="Rhea" id="RHEA-COMP:9683"/>
        <dbReference type="ChEBI" id="CHEBI:30616"/>
        <dbReference type="ChEBI" id="CHEBI:33019"/>
        <dbReference type="ChEBI" id="CHEBI:57305"/>
        <dbReference type="ChEBI" id="CHEBI:78442"/>
        <dbReference type="ChEBI" id="CHEBI:78522"/>
        <dbReference type="ChEBI" id="CHEBI:456215"/>
        <dbReference type="EC" id="6.1.1.14"/>
    </reaction>
</comment>
<comment type="subunit">
    <text evidence="1">Homodimer.</text>
</comment>
<comment type="subcellular location">
    <subcellularLocation>
        <location evidence="1">Cytoplasm</location>
    </subcellularLocation>
</comment>
<comment type="similarity">
    <text evidence="1">Belongs to the class-II aminoacyl-tRNA synthetase family.</text>
</comment>
<name>SYG_ALKOO</name>
<protein>
    <recommendedName>
        <fullName evidence="1">Glycine--tRNA ligase</fullName>
        <ecNumber evidence="1">6.1.1.14</ecNumber>
    </recommendedName>
    <alternativeName>
        <fullName evidence="1">Glycyl-tRNA synthetase</fullName>
        <shortName evidence="1">GlyRS</shortName>
    </alternativeName>
</protein>
<dbReference type="EC" id="6.1.1.14" evidence="1"/>
<dbReference type="EMBL" id="CP000853">
    <property type="protein sequence ID" value="ABW18801.1"/>
    <property type="molecule type" value="Genomic_DNA"/>
</dbReference>
<dbReference type="RefSeq" id="WP_012159113.1">
    <property type="nucleotide sequence ID" value="NC_009922.1"/>
</dbReference>
<dbReference type="SMR" id="A8MG73"/>
<dbReference type="STRING" id="350688.Clos_1255"/>
<dbReference type="KEGG" id="aoe:Clos_1255"/>
<dbReference type="eggNOG" id="COG0423">
    <property type="taxonomic scope" value="Bacteria"/>
</dbReference>
<dbReference type="HOGENOM" id="CLU_015515_2_1_9"/>
<dbReference type="OrthoDB" id="9760853at2"/>
<dbReference type="Proteomes" id="UP000000269">
    <property type="component" value="Chromosome"/>
</dbReference>
<dbReference type="GO" id="GO:0005737">
    <property type="term" value="C:cytoplasm"/>
    <property type="evidence" value="ECO:0007669"/>
    <property type="project" value="UniProtKB-SubCell"/>
</dbReference>
<dbReference type="GO" id="GO:0005524">
    <property type="term" value="F:ATP binding"/>
    <property type="evidence" value="ECO:0007669"/>
    <property type="project" value="UniProtKB-UniRule"/>
</dbReference>
<dbReference type="GO" id="GO:0140096">
    <property type="term" value="F:catalytic activity, acting on a protein"/>
    <property type="evidence" value="ECO:0007669"/>
    <property type="project" value="UniProtKB-ARBA"/>
</dbReference>
<dbReference type="GO" id="GO:0004820">
    <property type="term" value="F:glycine-tRNA ligase activity"/>
    <property type="evidence" value="ECO:0000250"/>
    <property type="project" value="UniProtKB"/>
</dbReference>
<dbReference type="GO" id="GO:0046983">
    <property type="term" value="F:protein dimerization activity"/>
    <property type="evidence" value="ECO:0000250"/>
    <property type="project" value="UniProtKB"/>
</dbReference>
<dbReference type="GO" id="GO:0016740">
    <property type="term" value="F:transferase activity"/>
    <property type="evidence" value="ECO:0007669"/>
    <property type="project" value="UniProtKB-ARBA"/>
</dbReference>
<dbReference type="GO" id="GO:0006426">
    <property type="term" value="P:glycyl-tRNA aminoacylation"/>
    <property type="evidence" value="ECO:0007669"/>
    <property type="project" value="UniProtKB-UniRule"/>
</dbReference>
<dbReference type="CDD" id="cd00774">
    <property type="entry name" value="GlyRS-like_core"/>
    <property type="match status" value="1"/>
</dbReference>
<dbReference type="CDD" id="cd00858">
    <property type="entry name" value="GlyRS_anticodon"/>
    <property type="match status" value="1"/>
</dbReference>
<dbReference type="FunFam" id="3.40.50.800:FF:000002">
    <property type="entry name" value="Glycine--tRNA ligase"/>
    <property type="match status" value="1"/>
</dbReference>
<dbReference type="Gene3D" id="3.40.50.800">
    <property type="entry name" value="Anticodon-binding domain"/>
    <property type="match status" value="1"/>
</dbReference>
<dbReference type="Gene3D" id="3.30.930.10">
    <property type="entry name" value="Bira Bifunctional Protein, Domain 2"/>
    <property type="match status" value="1"/>
</dbReference>
<dbReference type="HAMAP" id="MF_00253_B">
    <property type="entry name" value="Gly_tRNA_synth_B"/>
    <property type="match status" value="1"/>
</dbReference>
<dbReference type="InterPro" id="IPR002314">
    <property type="entry name" value="aa-tRNA-synt_IIb"/>
</dbReference>
<dbReference type="InterPro" id="IPR006195">
    <property type="entry name" value="aa-tRNA-synth_II"/>
</dbReference>
<dbReference type="InterPro" id="IPR045864">
    <property type="entry name" value="aa-tRNA-synth_II/BPL/LPL"/>
</dbReference>
<dbReference type="InterPro" id="IPR004154">
    <property type="entry name" value="Anticodon-bd"/>
</dbReference>
<dbReference type="InterPro" id="IPR036621">
    <property type="entry name" value="Anticodon-bd_dom_sf"/>
</dbReference>
<dbReference type="InterPro" id="IPR027031">
    <property type="entry name" value="Gly-tRNA_synthase/POLG2"/>
</dbReference>
<dbReference type="InterPro" id="IPR022961">
    <property type="entry name" value="Gly_tRNA_ligase_bac"/>
</dbReference>
<dbReference type="InterPro" id="IPR033731">
    <property type="entry name" value="GlyRS-like_core"/>
</dbReference>
<dbReference type="InterPro" id="IPR002315">
    <property type="entry name" value="tRNA-synt_gly"/>
</dbReference>
<dbReference type="NCBIfam" id="TIGR00389">
    <property type="entry name" value="glyS_dimeric"/>
    <property type="match status" value="1"/>
</dbReference>
<dbReference type="NCBIfam" id="NF003211">
    <property type="entry name" value="PRK04173.1"/>
    <property type="match status" value="1"/>
</dbReference>
<dbReference type="PANTHER" id="PTHR10745:SF8">
    <property type="entry name" value="DNA POLYMERASE SUBUNIT GAMMA-2, MITOCHONDRIAL"/>
    <property type="match status" value="1"/>
</dbReference>
<dbReference type="PANTHER" id="PTHR10745">
    <property type="entry name" value="GLYCYL-TRNA SYNTHETASE/DNA POLYMERASE SUBUNIT GAMMA-2"/>
    <property type="match status" value="1"/>
</dbReference>
<dbReference type="Pfam" id="PF03129">
    <property type="entry name" value="HGTP_anticodon"/>
    <property type="match status" value="1"/>
</dbReference>
<dbReference type="Pfam" id="PF00587">
    <property type="entry name" value="tRNA-synt_2b"/>
    <property type="match status" value="1"/>
</dbReference>
<dbReference type="PRINTS" id="PR01043">
    <property type="entry name" value="TRNASYNTHGLY"/>
</dbReference>
<dbReference type="SUPFAM" id="SSF52954">
    <property type="entry name" value="Class II aaRS ABD-related"/>
    <property type="match status" value="1"/>
</dbReference>
<dbReference type="SUPFAM" id="SSF55681">
    <property type="entry name" value="Class II aaRS and biotin synthetases"/>
    <property type="match status" value="1"/>
</dbReference>
<dbReference type="PROSITE" id="PS50862">
    <property type="entry name" value="AA_TRNA_LIGASE_II"/>
    <property type="match status" value="1"/>
</dbReference>
<organism>
    <name type="scientific">Alkaliphilus oremlandii (strain OhILAs)</name>
    <name type="common">Clostridium oremlandii (strain OhILAs)</name>
    <dbReference type="NCBI Taxonomy" id="350688"/>
    <lineage>
        <taxon>Bacteria</taxon>
        <taxon>Bacillati</taxon>
        <taxon>Bacillota</taxon>
        <taxon>Clostridia</taxon>
        <taxon>Peptostreptococcales</taxon>
        <taxon>Natronincolaceae</taxon>
        <taxon>Alkaliphilus</taxon>
    </lineage>
</organism>
<gene>
    <name evidence="1" type="primary">glyQS</name>
    <name type="ordered locus">Clos_1255</name>
</gene>
<sequence>MATEKTMEKIVSLAKSRGFIFPGSEIYGGLANTWDYGPLGVELKNNVKKAWWKKFIQQSPYNVGLDAAILMNPKTWEASGHIGGFSDPLMDCKKCRSRFRADKLIEDYMHSQNEETVVDGWSNQQMKTYIEEKEIVCPECGAKDFTDIRQFNLMFKTFQGVTEDSSTEIFLRPETAQGIFVNFKNVLRTSRKKVPFGIGQIGKSFRNEITPGNFTFRTREFEQMELEFFCKPGEDLEWFNYWKEFCKNWLLNLNLTEENLRIRDHAEEELSHYSKATTDFEYRFPFGWGELWGVADRTDFDLKQHSEHSGEDFTYQDPITNEKYVPYCIEPSVGVDRVALAFLVDAYDEEVIDEKDTRVVLRLHPALAPFKAAVLPLTKKLKDQALELYETLSENYMVDYDEAGSIGKRYRRHDEIGTPFCITFDYDSLEDQCVTIRHRDSMEQERIQISELTTYLNEKLKF</sequence>
<reference key="1">
    <citation type="submission" date="2007-10" db="EMBL/GenBank/DDBJ databases">
        <title>Complete genome of Alkaliphilus oremlandii OhILAs.</title>
        <authorList>
            <person name="Copeland A."/>
            <person name="Lucas S."/>
            <person name="Lapidus A."/>
            <person name="Barry K."/>
            <person name="Detter J.C."/>
            <person name="Glavina del Rio T."/>
            <person name="Hammon N."/>
            <person name="Israni S."/>
            <person name="Dalin E."/>
            <person name="Tice H."/>
            <person name="Pitluck S."/>
            <person name="Chain P."/>
            <person name="Malfatti S."/>
            <person name="Shin M."/>
            <person name="Vergez L."/>
            <person name="Schmutz J."/>
            <person name="Larimer F."/>
            <person name="Land M."/>
            <person name="Hauser L."/>
            <person name="Kyrpides N."/>
            <person name="Mikhailova N."/>
            <person name="Stolz J.F."/>
            <person name="Dawson A."/>
            <person name="Fisher E."/>
            <person name="Crable B."/>
            <person name="Perera E."/>
            <person name="Lisak J."/>
            <person name="Ranganathan M."/>
            <person name="Basu P."/>
            <person name="Richardson P."/>
        </authorList>
    </citation>
    <scope>NUCLEOTIDE SEQUENCE [LARGE SCALE GENOMIC DNA]</scope>
    <source>
        <strain>OhILAs</strain>
    </source>
</reference>
<evidence type="ECO:0000255" key="1">
    <source>
        <dbReference type="HAMAP-Rule" id="MF_00253"/>
    </source>
</evidence>
<proteinExistence type="inferred from homology"/>